<dbReference type="EC" id="7.4.2.8" evidence="1"/>
<dbReference type="EMBL" id="CP000437">
    <property type="protein sequence ID" value="ABI83233.1"/>
    <property type="molecule type" value="Genomic_DNA"/>
</dbReference>
<dbReference type="RefSeq" id="WP_011648742.1">
    <property type="nucleotide sequence ID" value="NC_017463.1"/>
</dbReference>
<dbReference type="SMR" id="Q0BL01"/>
<dbReference type="KEGG" id="fth:FTH_1418"/>
<dbReference type="GO" id="GO:0031522">
    <property type="term" value="C:cell envelope Sec protein transport complex"/>
    <property type="evidence" value="ECO:0007669"/>
    <property type="project" value="TreeGrafter"/>
</dbReference>
<dbReference type="GO" id="GO:0005829">
    <property type="term" value="C:cytosol"/>
    <property type="evidence" value="ECO:0007669"/>
    <property type="project" value="TreeGrafter"/>
</dbReference>
<dbReference type="GO" id="GO:0005886">
    <property type="term" value="C:plasma membrane"/>
    <property type="evidence" value="ECO:0007669"/>
    <property type="project" value="UniProtKB-SubCell"/>
</dbReference>
<dbReference type="GO" id="GO:0005524">
    <property type="term" value="F:ATP binding"/>
    <property type="evidence" value="ECO:0007669"/>
    <property type="project" value="UniProtKB-UniRule"/>
</dbReference>
<dbReference type="GO" id="GO:0046872">
    <property type="term" value="F:metal ion binding"/>
    <property type="evidence" value="ECO:0007669"/>
    <property type="project" value="UniProtKB-KW"/>
</dbReference>
<dbReference type="GO" id="GO:0008564">
    <property type="term" value="F:protein-exporting ATPase activity"/>
    <property type="evidence" value="ECO:0007669"/>
    <property type="project" value="UniProtKB-EC"/>
</dbReference>
<dbReference type="GO" id="GO:0065002">
    <property type="term" value="P:intracellular protein transmembrane transport"/>
    <property type="evidence" value="ECO:0007669"/>
    <property type="project" value="UniProtKB-UniRule"/>
</dbReference>
<dbReference type="GO" id="GO:0017038">
    <property type="term" value="P:protein import"/>
    <property type="evidence" value="ECO:0007669"/>
    <property type="project" value="InterPro"/>
</dbReference>
<dbReference type="GO" id="GO:0006605">
    <property type="term" value="P:protein targeting"/>
    <property type="evidence" value="ECO:0007669"/>
    <property type="project" value="UniProtKB-UniRule"/>
</dbReference>
<dbReference type="GO" id="GO:0043952">
    <property type="term" value="P:protein transport by the Sec complex"/>
    <property type="evidence" value="ECO:0007669"/>
    <property type="project" value="TreeGrafter"/>
</dbReference>
<dbReference type="CDD" id="cd17928">
    <property type="entry name" value="DEXDc_SecA"/>
    <property type="match status" value="1"/>
</dbReference>
<dbReference type="CDD" id="cd18803">
    <property type="entry name" value="SF2_C_secA"/>
    <property type="match status" value="1"/>
</dbReference>
<dbReference type="FunFam" id="3.40.50.300:FF:000113">
    <property type="entry name" value="Preprotein translocase subunit SecA"/>
    <property type="match status" value="1"/>
</dbReference>
<dbReference type="FunFam" id="3.90.1440.10:FF:000001">
    <property type="entry name" value="Preprotein translocase subunit SecA"/>
    <property type="match status" value="1"/>
</dbReference>
<dbReference type="FunFam" id="1.10.3060.10:FF:000003">
    <property type="entry name" value="Protein translocase subunit SecA"/>
    <property type="match status" value="1"/>
</dbReference>
<dbReference type="FunFam" id="3.40.50.300:FF:000334">
    <property type="entry name" value="Protein translocase subunit SecA"/>
    <property type="match status" value="1"/>
</dbReference>
<dbReference type="Gene3D" id="1.10.3060.10">
    <property type="entry name" value="Helical scaffold and wing domains of SecA"/>
    <property type="match status" value="1"/>
</dbReference>
<dbReference type="Gene3D" id="3.40.50.300">
    <property type="entry name" value="P-loop containing nucleotide triphosphate hydrolases"/>
    <property type="match status" value="2"/>
</dbReference>
<dbReference type="Gene3D" id="3.90.1440.10">
    <property type="entry name" value="SecA, preprotein cross-linking domain"/>
    <property type="match status" value="1"/>
</dbReference>
<dbReference type="HAMAP" id="MF_01382">
    <property type="entry name" value="SecA"/>
    <property type="match status" value="1"/>
</dbReference>
<dbReference type="InterPro" id="IPR014001">
    <property type="entry name" value="Helicase_ATP-bd"/>
</dbReference>
<dbReference type="InterPro" id="IPR001650">
    <property type="entry name" value="Helicase_C-like"/>
</dbReference>
<dbReference type="InterPro" id="IPR027417">
    <property type="entry name" value="P-loop_NTPase"/>
</dbReference>
<dbReference type="InterPro" id="IPR004027">
    <property type="entry name" value="SEC_C_motif"/>
</dbReference>
<dbReference type="InterPro" id="IPR000185">
    <property type="entry name" value="SecA"/>
</dbReference>
<dbReference type="InterPro" id="IPR020937">
    <property type="entry name" value="SecA_CS"/>
</dbReference>
<dbReference type="InterPro" id="IPR011115">
    <property type="entry name" value="SecA_DEAD"/>
</dbReference>
<dbReference type="InterPro" id="IPR014018">
    <property type="entry name" value="SecA_motor_DEAD"/>
</dbReference>
<dbReference type="InterPro" id="IPR011130">
    <property type="entry name" value="SecA_preprotein_X-link_dom"/>
</dbReference>
<dbReference type="InterPro" id="IPR044722">
    <property type="entry name" value="SecA_SF2_C"/>
</dbReference>
<dbReference type="InterPro" id="IPR011116">
    <property type="entry name" value="SecA_Wing/Scaffold"/>
</dbReference>
<dbReference type="InterPro" id="IPR036266">
    <property type="entry name" value="SecA_Wing/Scaffold_sf"/>
</dbReference>
<dbReference type="InterPro" id="IPR036670">
    <property type="entry name" value="SecA_X-link_sf"/>
</dbReference>
<dbReference type="NCBIfam" id="NF009538">
    <property type="entry name" value="PRK12904.1"/>
    <property type="match status" value="1"/>
</dbReference>
<dbReference type="NCBIfam" id="TIGR00963">
    <property type="entry name" value="secA"/>
    <property type="match status" value="1"/>
</dbReference>
<dbReference type="PANTHER" id="PTHR30612:SF0">
    <property type="entry name" value="CHLOROPLAST PROTEIN-TRANSPORTING ATPASE"/>
    <property type="match status" value="1"/>
</dbReference>
<dbReference type="PANTHER" id="PTHR30612">
    <property type="entry name" value="SECA INNER MEMBRANE COMPONENT OF SEC PROTEIN SECRETION SYSTEM"/>
    <property type="match status" value="1"/>
</dbReference>
<dbReference type="Pfam" id="PF21090">
    <property type="entry name" value="P-loop_SecA"/>
    <property type="match status" value="1"/>
</dbReference>
<dbReference type="Pfam" id="PF02810">
    <property type="entry name" value="SEC-C"/>
    <property type="match status" value="1"/>
</dbReference>
<dbReference type="Pfam" id="PF07517">
    <property type="entry name" value="SecA_DEAD"/>
    <property type="match status" value="1"/>
</dbReference>
<dbReference type="Pfam" id="PF01043">
    <property type="entry name" value="SecA_PP_bind"/>
    <property type="match status" value="1"/>
</dbReference>
<dbReference type="Pfam" id="PF07516">
    <property type="entry name" value="SecA_SW"/>
    <property type="match status" value="1"/>
</dbReference>
<dbReference type="PRINTS" id="PR00906">
    <property type="entry name" value="SECA"/>
</dbReference>
<dbReference type="SMART" id="SM00957">
    <property type="entry name" value="SecA_DEAD"/>
    <property type="match status" value="1"/>
</dbReference>
<dbReference type="SMART" id="SM00958">
    <property type="entry name" value="SecA_PP_bind"/>
    <property type="match status" value="1"/>
</dbReference>
<dbReference type="SUPFAM" id="SSF81886">
    <property type="entry name" value="Helical scaffold and wing domains of SecA"/>
    <property type="match status" value="1"/>
</dbReference>
<dbReference type="SUPFAM" id="SSF52540">
    <property type="entry name" value="P-loop containing nucleoside triphosphate hydrolases"/>
    <property type="match status" value="2"/>
</dbReference>
<dbReference type="SUPFAM" id="SSF81767">
    <property type="entry name" value="Pre-protein crosslinking domain of SecA"/>
    <property type="match status" value="1"/>
</dbReference>
<dbReference type="PROSITE" id="PS01312">
    <property type="entry name" value="SECA"/>
    <property type="match status" value="1"/>
</dbReference>
<dbReference type="PROSITE" id="PS51196">
    <property type="entry name" value="SECA_MOTOR_DEAD"/>
    <property type="match status" value="1"/>
</dbReference>
<sequence length="906" mass="103556">MLSLVQKIIGSRNERFIKKVSRIVQKINSLEPEFEKLSDEQLKAKTFEYRERLANGEILDNLLPEAFATVREAGKRTKNMRHYDVQLIGGIVLHQGKVAEMKTGEGKTLVATLPAYLNALTGDGVHVITVNDYLAKRDAELMSDIYEFLGMSVGVIVADLNPQQRKEAYACDITYGTNNEFGFDYLRDNMAYEKEQQVQRSRNYVIIDEVDSILIDEARTPLIISGASDDSSEMYNLFNRLVPYLEKQEKEEVENEQEQRDFYVDEKSKNAYLTEKGYAKIENMLKKEGILEEDDNLYSPHNITKMHYLNACLRAHSLYQLNIDYIVRDQEIVIIDESTGRAMPGRRWSDGLHQAIEAKEGVKINAENQTMASITFQNFFKLYNKIAGMTGTADTEAFELHSIYGLEVIIIPTNKPMIRKDHHDEIYGSVREKFDAIVEDIKERISKGQPVLVGTASIEASEVLSTLLKKKKIRHNVLNAKQHEKEASIIAMAGYPDNVTIATNMAGRGTDIILGGNLEVEIAQLEDPTPEDIAQIKAEWLKRNEAVKKAGGLCIIGSERHDSRRIDNQLRGRAARQGDPGESKFYLSMDDNLLRIFASQSMAERVKKGLKGGESLAFGFMSKVISKAQGKVESYHFDIRKNLLEYDNVVNTQRKVIYEQRQSLLEAEDVSDILADIRIDVAEQLFHDYVSAGSMHELWDLEGLEKALKSDFMIELDLQKLYEEDDSLGEEDLKRLVREAIEIEFVEKTKNLDSGAVRQFEKFSLLQSLDTHWREHLSSIDHLRNSINLRGYAQKDPKNEYKKEAFELFSTMLDNFKYEVISSLAKIRIATEEETQRAQQEWQESMSDIKAEHESVIDNNQRHDEDEQEEAPKVQQVRREGPKVKRNDPCPCGSGKKYKQCHGKVE</sequence>
<name>SECA_FRATO</name>
<gene>
    <name evidence="1" type="primary">secA</name>
    <name type="ordered locus">FTH_1418</name>
</gene>
<proteinExistence type="inferred from homology"/>
<accession>Q0BL01</accession>
<keyword id="KW-0067">ATP-binding</keyword>
<keyword id="KW-0997">Cell inner membrane</keyword>
<keyword id="KW-1003">Cell membrane</keyword>
<keyword id="KW-0963">Cytoplasm</keyword>
<keyword id="KW-0472">Membrane</keyword>
<keyword id="KW-0479">Metal-binding</keyword>
<keyword id="KW-0547">Nucleotide-binding</keyword>
<keyword id="KW-0653">Protein transport</keyword>
<keyword id="KW-1278">Translocase</keyword>
<keyword id="KW-0811">Translocation</keyword>
<keyword id="KW-0813">Transport</keyword>
<keyword id="KW-0862">Zinc</keyword>
<protein>
    <recommendedName>
        <fullName evidence="1">Protein translocase subunit SecA</fullName>
        <ecNumber evidence="1">7.4.2.8</ecNumber>
    </recommendedName>
</protein>
<reference key="1">
    <citation type="journal article" date="2006" name="J. Bacteriol.">
        <title>Chromosome rearrangement and diversification of Francisella tularensis revealed by the type B (OSU18) genome sequence.</title>
        <authorList>
            <person name="Petrosino J.F."/>
            <person name="Xiang Q."/>
            <person name="Karpathy S.E."/>
            <person name="Jiang H."/>
            <person name="Yerrapragada S."/>
            <person name="Liu Y."/>
            <person name="Gioia J."/>
            <person name="Hemphill L."/>
            <person name="Gonzalez A."/>
            <person name="Raghavan T.M."/>
            <person name="Uzman A."/>
            <person name="Fox G.E."/>
            <person name="Highlander S."/>
            <person name="Reichard M."/>
            <person name="Morton R.J."/>
            <person name="Clinkenbeard K.D."/>
            <person name="Weinstock G.M."/>
        </authorList>
    </citation>
    <scope>NUCLEOTIDE SEQUENCE [LARGE SCALE GENOMIC DNA]</scope>
    <source>
        <strain>OSU18</strain>
    </source>
</reference>
<feature type="chain" id="PRO_0000320815" description="Protein translocase subunit SecA">
    <location>
        <begin position="1"/>
        <end position="906"/>
    </location>
</feature>
<feature type="region of interest" description="Disordered" evidence="2">
    <location>
        <begin position="853"/>
        <end position="906"/>
    </location>
</feature>
<feature type="compositionally biased region" description="Basic and acidic residues" evidence="2">
    <location>
        <begin position="853"/>
        <end position="865"/>
    </location>
</feature>
<feature type="compositionally biased region" description="Basic and acidic residues" evidence="2">
    <location>
        <begin position="877"/>
        <end position="888"/>
    </location>
</feature>
<feature type="compositionally biased region" description="Basic residues" evidence="2">
    <location>
        <begin position="896"/>
        <end position="906"/>
    </location>
</feature>
<feature type="binding site" evidence="1">
    <location>
        <position position="86"/>
    </location>
    <ligand>
        <name>ATP</name>
        <dbReference type="ChEBI" id="CHEBI:30616"/>
    </ligand>
</feature>
<feature type="binding site" evidence="1">
    <location>
        <begin position="104"/>
        <end position="108"/>
    </location>
    <ligand>
        <name>ATP</name>
        <dbReference type="ChEBI" id="CHEBI:30616"/>
    </ligand>
</feature>
<feature type="binding site" evidence="1">
    <location>
        <position position="511"/>
    </location>
    <ligand>
        <name>ATP</name>
        <dbReference type="ChEBI" id="CHEBI:30616"/>
    </ligand>
</feature>
<feature type="binding site" evidence="1">
    <location>
        <position position="890"/>
    </location>
    <ligand>
        <name>Zn(2+)</name>
        <dbReference type="ChEBI" id="CHEBI:29105"/>
    </ligand>
</feature>
<feature type="binding site" evidence="1">
    <location>
        <position position="892"/>
    </location>
    <ligand>
        <name>Zn(2+)</name>
        <dbReference type="ChEBI" id="CHEBI:29105"/>
    </ligand>
</feature>
<feature type="binding site" evidence="1">
    <location>
        <position position="901"/>
    </location>
    <ligand>
        <name>Zn(2+)</name>
        <dbReference type="ChEBI" id="CHEBI:29105"/>
    </ligand>
</feature>
<feature type="binding site" evidence="1">
    <location>
        <position position="902"/>
    </location>
    <ligand>
        <name>Zn(2+)</name>
        <dbReference type="ChEBI" id="CHEBI:29105"/>
    </ligand>
</feature>
<organism>
    <name type="scientific">Francisella tularensis subsp. holarctica (strain OSU18)</name>
    <dbReference type="NCBI Taxonomy" id="393011"/>
    <lineage>
        <taxon>Bacteria</taxon>
        <taxon>Pseudomonadati</taxon>
        <taxon>Pseudomonadota</taxon>
        <taxon>Gammaproteobacteria</taxon>
        <taxon>Thiotrichales</taxon>
        <taxon>Francisellaceae</taxon>
        <taxon>Francisella</taxon>
    </lineage>
</organism>
<evidence type="ECO:0000255" key="1">
    <source>
        <dbReference type="HAMAP-Rule" id="MF_01382"/>
    </source>
</evidence>
<evidence type="ECO:0000256" key="2">
    <source>
        <dbReference type="SAM" id="MobiDB-lite"/>
    </source>
</evidence>
<comment type="function">
    <text evidence="1">Part of the Sec protein translocase complex. Interacts with the SecYEG preprotein conducting channel. Has a central role in coupling the hydrolysis of ATP to the transfer of proteins into and across the cell membrane, serving both as a receptor for the preprotein-SecB complex and as an ATP-driven molecular motor driving the stepwise translocation of polypeptide chains across the membrane.</text>
</comment>
<comment type="catalytic activity">
    <reaction evidence="1">
        <text>ATP + H2O + cellular proteinSide 1 = ADP + phosphate + cellular proteinSide 2.</text>
        <dbReference type="EC" id="7.4.2.8"/>
    </reaction>
</comment>
<comment type="cofactor">
    <cofactor evidence="1">
        <name>Zn(2+)</name>
        <dbReference type="ChEBI" id="CHEBI:29105"/>
    </cofactor>
    <text evidence="1">May bind 1 zinc ion per subunit.</text>
</comment>
<comment type="subunit">
    <text evidence="1">Monomer and homodimer. Part of the essential Sec protein translocation apparatus which comprises SecA, SecYEG and auxiliary proteins SecDF-YajC and YidC.</text>
</comment>
<comment type="subcellular location">
    <subcellularLocation>
        <location evidence="1">Cell inner membrane</location>
        <topology evidence="1">Peripheral membrane protein</topology>
        <orientation evidence="1">Cytoplasmic side</orientation>
    </subcellularLocation>
    <subcellularLocation>
        <location evidence="1">Cytoplasm</location>
    </subcellularLocation>
    <text evidence="1">Distribution is 50-50.</text>
</comment>
<comment type="similarity">
    <text evidence="1">Belongs to the SecA family.</text>
</comment>